<reference key="1">
    <citation type="journal article" date="1999" name="Antimicrob. Agents Chemother.">
        <title>Characterization and nucleotide sequence of a Klebsiella oxytoca cryptic plasmid encoding a CMY-type beta-lactamase: confirmation that the plasmid-mediated cephamycinase originated from the Citrobacter freundii AmpC beta-lactamase.</title>
        <authorList>
            <person name="Wu S.W."/>
            <person name="Dornbusch K."/>
            <person name="Kronvall G."/>
            <person name="Norgren M."/>
        </authorList>
    </citation>
    <scope>NUCLEOTIDE SEQUENCE [GENOMIC DNA]</scope>
    <source>
        <strain>KH11</strain>
    </source>
</reference>
<comment type="function">
    <text evidence="1">Guanidinium ion exporter. Couples guanidinium export to the proton motive force, exchanging one guanidinium ion for two protons.</text>
</comment>
<comment type="subcellular location">
    <subcellularLocation>
        <location evidence="1">Cell inner membrane</location>
        <topology evidence="1">Multi-pass membrane protein</topology>
    </subcellularLocation>
</comment>
<comment type="similarity">
    <text evidence="3">Belongs to the drug/metabolite transporter (DMT) superfamily. Small multidrug resistance (SMR) (TC 2.A.7.1) family. Gdx/SugE subfamily.</text>
</comment>
<evidence type="ECO:0000250" key="1">
    <source>
        <dbReference type="UniProtKB" id="P69937"/>
    </source>
</evidence>
<evidence type="ECO:0000255" key="2"/>
<evidence type="ECO:0000305" key="3"/>
<accession>Q799A3</accession>
<dbReference type="EMBL" id="Y17716">
    <property type="protein sequence ID" value="CAB42627.1"/>
    <property type="molecule type" value="Genomic_DNA"/>
</dbReference>
<dbReference type="RefSeq" id="WP_000118520.1">
    <property type="nucleotide sequence ID" value="NZ_JATAVI010000072.1"/>
</dbReference>
<dbReference type="SMR" id="Q799A3"/>
<dbReference type="STRING" id="571.AB185_33835"/>
<dbReference type="GeneID" id="93521401"/>
<dbReference type="GO" id="GO:0005886">
    <property type="term" value="C:plasma membrane"/>
    <property type="evidence" value="ECO:0007669"/>
    <property type="project" value="UniProtKB-SubCell"/>
</dbReference>
<dbReference type="GO" id="GO:0022857">
    <property type="term" value="F:transmembrane transporter activity"/>
    <property type="evidence" value="ECO:0007669"/>
    <property type="project" value="InterPro"/>
</dbReference>
<dbReference type="GO" id="GO:0006811">
    <property type="term" value="P:monoatomic ion transport"/>
    <property type="evidence" value="ECO:0007669"/>
    <property type="project" value="UniProtKB-KW"/>
</dbReference>
<dbReference type="FunFam" id="1.10.3730.20:FF:000001">
    <property type="entry name" value="Quaternary ammonium compound resistance transporter SugE"/>
    <property type="match status" value="1"/>
</dbReference>
<dbReference type="Gene3D" id="1.10.3730.20">
    <property type="match status" value="1"/>
</dbReference>
<dbReference type="InterPro" id="IPR000390">
    <property type="entry name" value="Small_drug/metabolite_transptr"/>
</dbReference>
<dbReference type="InterPro" id="IPR045324">
    <property type="entry name" value="Small_multidrug_res"/>
</dbReference>
<dbReference type="NCBIfam" id="NF008512">
    <property type="entry name" value="PRK11431.1"/>
    <property type="match status" value="1"/>
</dbReference>
<dbReference type="PANTHER" id="PTHR30561:SF0">
    <property type="entry name" value="GUANIDINIUM EXPORTER"/>
    <property type="match status" value="1"/>
</dbReference>
<dbReference type="PANTHER" id="PTHR30561">
    <property type="entry name" value="SMR FAMILY PROTON-DEPENDENT DRUG EFFLUX TRANSPORTER SUGE"/>
    <property type="match status" value="1"/>
</dbReference>
<dbReference type="Pfam" id="PF00893">
    <property type="entry name" value="Multi_Drug_Res"/>
    <property type="match status" value="1"/>
</dbReference>
<dbReference type="SUPFAM" id="SSF103481">
    <property type="entry name" value="Multidrug resistance efflux transporter EmrE"/>
    <property type="match status" value="1"/>
</dbReference>
<proteinExistence type="inferred from homology"/>
<feature type="chain" id="PRO_0000108099" description="Guanidinium exporter">
    <location>
        <begin position="1"/>
        <end position="105"/>
    </location>
</feature>
<feature type="topological domain" description="Cytoplasmic" evidence="2">
    <location>
        <position position="1"/>
    </location>
</feature>
<feature type="transmembrane region" description="Helical" evidence="2">
    <location>
        <begin position="2"/>
        <end position="19"/>
    </location>
</feature>
<feature type="topological domain" description="Periplasmic" evidence="2">
    <location>
        <begin position="20"/>
        <end position="28"/>
    </location>
</feature>
<feature type="transmembrane region" description="Helical" evidence="2">
    <location>
        <begin position="29"/>
        <end position="48"/>
    </location>
</feature>
<feature type="topological domain" description="Cytoplasmic" evidence="2">
    <location>
        <begin position="49"/>
        <end position="54"/>
    </location>
</feature>
<feature type="transmembrane region" description="Helical" evidence="2">
    <location>
        <begin position="55"/>
        <end position="77"/>
    </location>
</feature>
<feature type="topological domain" description="Periplasmic" evidence="2">
    <location>
        <begin position="78"/>
        <end position="86"/>
    </location>
</feature>
<feature type="transmembrane region" description="Helical" evidence="2">
    <location>
        <begin position="87"/>
        <end position="104"/>
    </location>
</feature>
<feature type="topological domain" description="Cytoplasmic" evidence="2">
    <location>
        <position position="105"/>
    </location>
</feature>
<name>GDX_KLEOX</name>
<sequence>MSWIVLLIAGLLEVVWAIGLKYTHGFTRLTPSIITIAAMIVSIAMLSWAMRTLPVGTAYAVWTGIGAVGAAITGILLLGESASPARLLSLGLIVAGIIGLKLSTH</sequence>
<keyword id="KW-0997">Cell inner membrane</keyword>
<keyword id="KW-1003">Cell membrane</keyword>
<keyword id="KW-0406">Ion transport</keyword>
<keyword id="KW-0472">Membrane</keyword>
<keyword id="KW-0614">Plasmid</keyword>
<keyword id="KW-0812">Transmembrane</keyword>
<keyword id="KW-1133">Transmembrane helix</keyword>
<keyword id="KW-0813">Transport</keyword>
<protein>
    <recommendedName>
        <fullName evidence="1">Guanidinium exporter</fullName>
    </recommendedName>
</protein>
<organism>
    <name type="scientific">Klebsiella oxytoca</name>
    <dbReference type="NCBI Taxonomy" id="571"/>
    <lineage>
        <taxon>Bacteria</taxon>
        <taxon>Pseudomonadati</taxon>
        <taxon>Pseudomonadota</taxon>
        <taxon>Gammaproteobacteria</taxon>
        <taxon>Enterobacterales</taxon>
        <taxon>Enterobacteriaceae</taxon>
        <taxon>Klebsiella/Raoultella group</taxon>
        <taxon>Klebsiella</taxon>
    </lineage>
</organism>
<geneLocation type="plasmid">
    <name>pTKH11</name>
</geneLocation>
<gene>
    <name evidence="1" type="primary">gdx</name>
    <name type="synonym">sugE</name>
</gene>